<proteinExistence type="inferred from homology"/>
<feature type="chain" id="PRO_0000438152" description="Probable inactive DNA (cytosine-5)-methyltransferase DRM1B">
    <location>
        <begin position="1"/>
        <end position="437"/>
    </location>
</feature>
<feature type="domain" description="UBA 1" evidence="2">
    <location>
        <begin position="20"/>
        <end position="60"/>
    </location>
</feature>
<feature type="domain" description="UBA 2" evidence="2">
    <location>
        <begin position="120"/>
        <end position="164"/>
    </location>
</feature>
<feature type="domain" description="SAM-dependent MTase DRM-type" evidence="3">
    <location>
        <begin position="243"/>
        <end position="437"/>
    </location>
</feature>
<name>DRM1B_ORYSJ</name>
<gene>
    <name evidence="4" type="primary">DRM1B</name>
    <name evidence="6" type="ordered locus">Os12g0108900</name>
    <name evidence="5" type="ordered locus">LOC_Os12g01800</name>
</gene>
<keyword id="KW-0238">DNA-binding</keyword>
<keyword id="KW-0489">Methyltransferase</keyword>
<keyword id="KW-0539">Nucleus</keyword>
<keyword id="KW-1185">Reference proteome</keyword>
<keyword id="KW-0677">Repeat</keyword>
<keyword id="KW-0949">S-adenosyl-L-methionine</keyword>
<keyword id="KW-0808">Transferase</keyword>
<protein>
    <recommendedName>
        <fullName evidence="4">Probable inactive DNA (cytosine-5)-methyltransferase DRM1B</fullName>
    </recommendedName>
    <alternativeName>
        <fullName evidence="4">Protein DOMAINS REARRANGED METHYLASE 1B</fullName>
    </alternativeName>
</protein>
<dbReference type="EMBL" id="DP000011">
    <property type="protein sequence ID" value="ABA96193.1"/>
    <property type="molecule type" value="Genomic_DNA"/>
</dbReference>
<dbReference type="EMBL" id="AP008218">
    <property type="protein sequence ID" value="BAF28973.1"/>
    <property type="molecule type" value="Genomic_DNA"/>
</dbReference>
<dbReference type="EMBL" id="AP014968">
    <property type="protein sequence ID" value="BAT15529.1"/>
    <property type="status" value="ALT_SEQ"/>
    <property type="molecule type" value="Genomic_DNA"/>
</dbReference>
<dbReference type="SMR" id="Q2QYR5"/>
<dbReference type="FunCoup" id="Q2QYR5">
    <property type="interactions" value="274"/>
</dbReference>
<dbReference type="STRING" id="39947.Q2QYR5"/>
<dbReference type="PaxDb" id="39947-Q2QYR5"/>
<dbReference type="KEGG" id="dosa:Os12g0108900"/>
<dbReference type="eggNOG" id="ENOG502QVZV">
    <property type="taxonomic scope" value="Eukaryota"/>
</dbReference>
<dbReference type="HOGENOM" id="CLU_006805_0_0_1"/>
<dbReference type="InParanoid" id="Q2QYR5"/>
<dbReference type="Proteomes" id="UP000000763">
    <property type="component" value="Chromosome 12"/>
</dbReference>
<dbReference type="Proteomes" id="UP000059680">
    <property type="component" value="Chromosome 12"/>
</dbReference>
<dbReference type="GO" id="GO:0005634">
    <property type="term" value="C:nucleus"/>
    <property type="evidence" value="ECO:0000318"/>
    <property type="project" value="GO_Central"/>
</dbReference>
<dbReference type="GO" id="GO:0003886">
    <property type="term" value="F:DNA (cytosine-5-)-methyltransferase activity"/>
    <property type="evidence" value="ECO:0000318"/>
    <property type="project" value="GO_Central"/>
</dbReference>
<dbReference type="GO" id="GO:0003677">
    <property type="term" value="F:DNA binding"/>
    <property type="evidence" value="ECO:0007669"/>
    <property type="project" value="UniProtKB-KW"/>
</dbReference>
<dbReference type="GO" id="GO:0032259">
    <property type="term" value="P:methylation"/>
    <property type="evidence" value="ECO:0007669"/>
    <property type="project" value="UniProtKB-KW"/>
</dbReference>
<dbReference type="CDD" id="cd14330">
    <property type="entry name" value="UBA_atDRM2_like"/>
    <property type="match status" value="1"/>
</dbReference>
<dbReference type="Gene3D" id="1.10.8.10">
    <property type="entry name" value="DNA helicase RuvA subunit, C-terminal domain"/>
    <property type="match status" value="1"/>
</dbReference>
<dbReference type="Gene3D" id="3.40.50.150">
    <property type="entry name" value="Vaccinia Virus protein VP39"/>
    <property type="match status" value="1"/>
</dbReference>
<dbReference type="InterPro" id="IPR029063">
    <property type="entry name" value="SAM-dependent_MTases_sf"/>
</dbReference>
<dbReference type="InterPro" id="IPR030380">
    <property type="entry name" value="SAM_MeTfrase_DRM"/>
</dbReference>
<dbReference type="InterPro" id="IPR015940">
    <property type="entry name" value="UBA"/>
</dbReference>
<dbReference type="InterPro" id="IPR009060">
    <property type="entry name" value="UBA-like_sf"/>
</dbReference>
<dbReference type="PANTHER" id="PTHR23068:SF25">
    <property type="entry name" value="DNA (CYTOSINE-5)-METHYLTRANSFERASE DRM2"/>
    <property type="match status" value="1"/>
</dbReference>
<dbReference type="PANTHER" id="PTHR23068">
    <property type="entry name" value="DNA CYTOSINE-5- -METHYLTRANSFERASE 3-RELATED"/>
    <property type="match status" value="1"/>
</dbReference>
<dbReference type="SUPFAM" id="SSF53335">
    <property type="entry name" value="S-adenosyl-L-methionine-dependent methyltransferases"/>
    <property type="match status" value="1"/>
</dbReference>
<dbReference type="SUPFAM" id="SSF46934">
    <property type="entry name" value="UBA-like"/>
    <property type="match status" value="1"/>
</dbReference>
<dbReference type="PROSITE" id="PS51680">
    <property type="entry name" value="SAM_MT_DRM"/>
    <property type="match status" value="1"/>
</dbReference>
<dbReference type="PROSITE" id="PS50030">
    <property type="entry name" value="UBA"/>
    <property type="match status" value="1"/>
</dbReference>
<reference key="1">
    <citation type="journal article" date="2005" name="BMC Biol.">
        <title>The sequence of rice chromosomes 11 and 12, rich in disease resistance genes and recent gene duplications.</title>
        <authorList>
            <consortium name="The rice chromosomes 11 and 12 sequencing consortia"/>
        </authorList>
    </citation>
    <scope>NUCLEOTIDE SEQUENCE [LARGE SCALE GENOMIC DNA]</scope>
    <source>
        <strain>cv. Nipponbare</strain>
    </source>
</reference>
<reference key="2">
    <citation type="journal article" date="2005" name="Nature">
        <title>The map-based sequence of the rice genome.</title>
        <authorList>
            <consortium name="International rice genome sequencing project (IRGSP)"/>
        </authorList>
    </citation>
    <scope>NUCLEOTIDE SEQUENCE [LARGE SCALE GENOMIC DNA]</scope>
    <source>
        <strain>cv. Nipponbare</strain>
    </source>
</reference>
<reference key="3">
    <citation type="journal article" date="2008" name="Nucleic Acids Res.">
        <title>The rice annotation project database (RAP-DB): 2008 update.</title>
        <authorList>
            <consortium name="The rice annotation project (RAP)"/>
        </authorList>
    </citation>
    <scope>GENOME REANNOTATION</scope>
    <source>
        <strain>cv. Nipponbare</strain>
    </source>
</reference>
<reference key="4">
    <citation type="journal article" date="2013" name="Rice">
        <title>Improvement of the Oryza sativa Nipponbare reference genome using next generation sequence and optical map data.</title>
        <authorList>
            <person name="Kawahara Y."/>
            <person name="de la Bastide M."/>
            <person name="Hamilton J.P."/>
            <person name="Kanamori H."/>
            <person name="McCombie W.R."/>
            <person name="Ouyang S."/>
            <person name="Schwartz D.C."/>
            <person name="Tanaka T."/>
            <person name="Wu J."/>
            <person name="Zhou S."/>
            <person name="Childs K.L."/>
            <person name="Davidson R.M."/>
            <person name="Lin H."/>
            <person name="Quesada-Ocampo L."/>
            <person name="Vaillancourt B."/>
            <person name="Sakai H."/>
            <person name="Lee S.S."/>
            <person name="Kim J."/>
            <person name="Numa H."/>
            <person name="Itoh T."/>
            <person name="Buell C.R."/>
            <person name="Matsumoto T."/>
        </authorList>
    </citation>
    <scope>GENOME REANNOTATION</scope>
    <source>
        <strain>cv. Nipponbare</strain>
    </source>
</reference>
<sequence length="437" mass="49630">MRIASSSGILMDANGKANGSAPSALVAYFLGMGFSREMVFRAIKEIGNDNNNTFPHLLQLLPFLSGDTDSEQILELLLTYQILEEEDEEEDVNWDEDDTVDNFDRATYSDGSGDEDFLQEMSEKDEKIKSLVSMGFPEDEAMRAITRCGLDASVDLLVESIYAPASAGNVYFTNLSDYEDTEFSSFGGRKKTKLIDGTKKKRERYRSRPQWNQVPFDGSHEEPMPLPNPMVGFSLPNDGLRSVHRNLPDHALGPPFFYYENVALAPKGVWTTISRFLYDIYPEFVDSKYFCAAARKRGYIHNLPIENRSPVLPIPPKTISEAFPSTKMWWPSWDPRRQFNCLQTYVASAKHTERIRCALGRFGDALPPAVQKSVLEECRKWNLVWVGKNKVATLEPDEMEFLLGYPRNHTRGVSRKRDIELLGIHSKLIQLHTTSLC</sequence>
<organism>
    <name type="scientific">Oryza sativa subsp. japonica</name>
    <name type="common">Rice</name>
    <dbReference type="NCBI Taxonomy" id="39947"/>
    <lineage>
        <taxon>Eukaryota</taxon>
        <taxon>Viridiplantae</taxon>
        <taxon>Streptophyta</taxon>
        <taxon>Embryophyta</taxon>
        <taxon>Tracheophyta</taxon>
        <taxon>Spermatophyta</taxon>
        <taxon>Magnoliopsida</taxon>
        <taxon>Liliopsida</taxon>
        <taxon>Poales</taxon>
        <taxon>Poaceae</taxon>
        <taxon>BOP clade</taxon>
        <taxon>Oryzoideae</taxon>
        <taxon>Oryzeae</taxon>
        <taxon>Oryzinae</taxon>
        <taxon>Oryza</taxon>
        <taxon>Oryza sativa</taxon>
    </lineage>
</organism>
<accession>Q2QYR5</accession>
<accession>A0A0P0Y6M9</accession>
<comment type="function">
    <text evidence="1">Involved in de novo DNA methylation. Involved in RNA-directed DNA methylation (RdDM).</text>
</comment>
<comment type="subcellular location">
    <subcellularLocation>
        <location evidence="4">Nucleus</location>
    </subcellularLocation>
</comment>
<comment type="similarity">
    <text evidence="3">Belongs to the class I-like SAM-binding methyltransferase superfamily. DRM-methyltransferase family.</text>
</comment>
<comment type="caution">
    <text>Lacks the conserved tripeptide Ser-Pro-Cys in position 405 necessary for the methyltransferase activity in DRM protein (AC Q9M548).</text>
</comment>
<comment type="sequence caution" evidence="4">
    <conflict type="erroneous gene model prediction">
        <sequence resource="EMBL-CDS" id="BAT15529"/>
    </conflict>
</comment>
<evidence type="ECO:0000250" key="1">
    <source>
        <dbReference type="UniProtKB" id="Q10SU5"/>
    </source>
</evidence>
<evidence type="ECO:0000255" key="2">
    <source>
        <dbReference type="PROSITE-ProRule" id="PRU00212"/>
    </source>
</evidence>
<evidence type="ECO:0000255" key="3">
    <source>
        <dbReference type="PROSITE-ProRule" id="PRU01017"/>
    </source>
</evidence>
<evidence type="ECO:0000305" key="4"/>
<evidence type="ECO:0000312" key="5">
    <source>
        <dbReference type="EMBL" id="ABA96193.1"/>
    </source>
</evidence>
<evidence type="ECO:0000312" key="6">
    <source>
        <dbReference type="EMBL" id="BAF28973.1"/>
    </source>
</evidence>